<sequence length="269" mass="28875">MTNQKISRDVHHLAHRMSGFQESSRIVPEEAPIAMSYNGTTQAVMMATPGDLEDFAIGFSLTENIVTRIEEIEALDIVAFESGIDIQMKLAKQPEQRLSARRRFMAGPVGCGLCGIDSIEQALRPLHPLEECSTTFTTRDIAAAVASLGAAQALNAKTHATHGAGFFRPGEGLFAVREDIGRHNALDKLIGAVAREGLLAEEGIVAITSRVSVEMVQKAVMLGVPVLAAISAPTALAIRTAEAANLTLVALVRDEEFDIYTHCGRIIES</sequence>
<proteinExistence type="inferred from homology"/>
<keyword id="KW-0963">Cytoplasm</keyword>
<keyword id="KW-0501">Molybdenum cofactor biosynthesis</keyword>
<evidence type="ECO:0000255" key="1">
    <source>
        <dbReference type="HAMAP-Rule" id="MF_00187"/>
    </source>
</evidence>
<organism>
    <name type="scientific">Brucella abortus biovar 1 (strain 9-941)</name>
    <dbReference type="NCBI Taxonomy" id="262698"/>
    <lineage>
        <taxon>Bacteria</taxon>
        <taxon>Pseudomonadati</taxon>
        <taxon>Pseudomonadota</taxon>
        <taxon>Alphaproteobacteria</taxon>
        <taxon>Hyphomicrobiales</taxon>
        <taxon>Brucellaceae</taxon>
        <taxon>Brucella/Ochrobactrum group</taxon>
        <taxon>Brucella</taxon>
    </lineage>
</organism>
<dbReference type="EMBL" id="AE017224">
    <property type="protein sequence ID" value="AAX75952.1"/>
    <property type="molecule type" value="Genomic_DNA"/>
</dbReference>
<dbReference type="RefSeq" id="WP_002965945.1">
    <property type="nucleotide sequence ID" value="NC_006933.1"/>
</dbReference>
<dbReference type="SMR" id="Q578I2"/>
<dbReference type="EnsemblBacteria" id="AAX75952">
    <property type="protein sequence ID" value="AAX75952"/>
    <property type="gene ID" value="BruAb2_0534"/>
</dbReference>
<dbReference type="GeneID" id="93015551"/>
<dbReference type="KEGG" id="bmb:BruAb2_0534"/>
<dbReference type="HOGENOM" id="CLU_056887_2_1_5"/>
<dbReference type="Proteomes" id="UP000000540">
    <property type="component" value="Chromosome II"/>
</dbReference>
<dbReference type="GO" id="GO:0005737">
    <property type="term" value="C:cytoplasm"/>
    <property type="evidence" value="ECO:0007669"/>
    <property type="project" value="UniProtKB-SubCell"/>
</dbReference>
<dbReference type="GO" id="GO:0097163">
    <property type="term" value="F:sulfur carrier activity"/>
    <property type="evidence" value="ECO:0007669"/>
    <property type="project" value="UniProtKB-UniRule"/>
</dbReference>
<dbReference type="GO" id="GO:0016783">
    <property type="term" value="F:sulfurtransferase activity"/>
    <property type="evidence" value="ECO:0007669"/>
    <property type="project" value="InterPro"/>
</dbReference>
<dbReference type="GO" id="GO:0006777">
    <property type="term" value="P:Mo-molybdopterin cofactor biosynthetic process"/>
    <property type="evidence" value="ECO:0007669"/>
    <property type="project" value="UniProtKB-UniRule"/>
</dbReference>
<dbReference type="Gene3D" id="3.10.20.10">
    <property type="match status" value="1"/>
</dbReference>
<dbReference type="Gene3D" id="3.40.140.10">
    <property type="entry name" value="Cytidine Deaminase, domain 2"/>
    <property type="match status" value="1"/>
</dbReference>
<dbReference type="HAMAP" id="MF_00187">
    <property type="entry name" value="FdhD"/>
    <property type="match status" value="1"/>
</dbReference>
<dbReference type="InterPro" id="IPR016193">
    <property type="entry name" value="Cytidine_deaminase-like"/>
</dbReference>
<dbReference type="InterPro" id="IPR003786">
    <property type="entry name" value="FdhD"/>
</dbReference>
<dbReference type="NCBIfam" id="TIGR00129">
    <property type="entry name" value="fdhD_narQ"/>
    <property type="match status" value="1"/>
</dbReference>
<dbReference type="PANTHER" id="PTHR30592">
    <property type="entry name" value="FORMATE DEHYDROGENASE"/>
    <property type="match status" value="1"/>
</dbReference>
<dbReference type="PANTHER" id="PTHR30592:SF1">
    <property type="entry name" value="SULFUR CARRIER PROTEIN FDHD"/>
    <property type="match status" value="1"/>
</dbReference>
<dbReference type="Pfam" id="PF02634">
    <property type="entry name" value="FdhD-NarQ"/>
    <property type="match status" value="1"/>
</dbReference>
<dbReference type="PIRSF" id="PIRSF015626">
    <property type="entry name" value="FdhD"/>
    <property type="match status" value="1"/>
</dbReference>
<dbReference type="SUPFAM" id="SSF53927">
    <property type="entry name" value="Cytidine deaminase-like"/>
    <property type="match status" value="1"/>
</dbReference>
<name>FDHD_BRUAB</name>
<comment type="function">
    <text evidence="1">Required for formate dehydrogenase (FDH) activity. Acts as a sulfur carrier protein that transfers sulfur from IscS to the molybdenum cofactor prior to its insertion into FDH.</text>
</comment>
<comment type="subcellular location">
    <subcellularLocation>
        <location evidence="1">Cytoplasm</location>
    </subcellularLocation>
</comment>
<comment type="similarity">
    <text evidence="1">Belongs to the FdhD family.</text>
</comment>
<reference key="1">
    <citation type="journal article" date="2005" name="J. Bacteriol.">
        <title>Completion of the genome sequence of Brucella abortus and comparison to the highly similar genomes of Brucella melitensis and Brucella suis.</title>
        <authorList>
            <person name="Halling S.M."/>
            <person name="Peterson-Burch B.D."/>
            <person name="Bricker B.J."/>
            <person name="Zuerner R.L."/>
            <person name="Qing Z."/>
            <person name="Li L.-L."/>
            <person name="Kapur V."/>
            <person name="Alt D.P."/>
            <person name="Olsen S.C."/>
        </authorList>
    </citation>
    <scope>NUCLEOTIDE SEQUENCE [LARGE SCALE GENOMIC DNA]</scope>
    <source>
        <strain>9-941</strain>
    </source>
</reference>
<feature type="chain" id="PRO_0000152893" description="Sulfur carrier protein FdhD">
    <location>
        <begin position="1"/>
        <end position="269"/>
    </location>
</feature>
<feature type="active site" description="Cysteine persulfide intermediate" evidence="1">
    <location>
        <position position="111"/>
    </location>
</feature>
<protein>
    <recommendedName>
        <fullName evidence="1">Sulfur carrier protein FdhD</fullName>
    </recommendedName>
</protein>
<gene>
    <name evidence="1" type="primary">fdhD</name>
    <name type="ordered locus">BruAb2_0534</name>
</gene>
<accession>Q578I2</accession>